<comment type="function">
    <text evidence="1">Part of the SNAPc complex required for the transcription of both RNA polymerase II and III small-nuclear RNA genes. Binds to the proximal sequence element (PSE), a non-TATA-box basal promoter element common to these 2 types of genes. Recruits TBP and BRF2 to the U6 snRNA TATA box (By similarity).</text>
</comment>
<comment type="subunit">
    <text evidence="1">Part of the SNAPc complex composed of 5 subunits: SNAPC1, SNAPC2, SNAPC3, SNAPC4 and SNAPC5. SNAPC3 interacts with SNAPC1 (By similarity).</text>
</comment>
<comment type="subcellular location">
    <subcellularLocation>
        <location evidence="1">Nucleus</location>
    </subcellularLocation>
</comment>
<comment type="similarity">
    <text evidence="3">Belongs to the SNAPC3/SRD2 family.</text>
</comment>
<proteinExistence type="evidence at protein level"/>
<feature type="chain" id="PRO_0000072026" description="snRNA-activating protein complex subunit 3">
    <location>
        <begin position="1"/>
        <end position="407"/>
    </location>
</feature>
<feature type="region of interest" description="Disordered" evidence="2">
    <location>
        <begin position="1"/>
        <end position="25"/>
    </location>
</feature>
<feature type="region of interest" description="Disordered" evidence="2">
    <location>
        <begin position="58"/>
        <end position="78"/>
    </location>
</feature>
<feature type="compositionally biased region" description="Gly residues" evidence="2">
    <location>
        <begin position="1"/>
        <end position="12"/>
    </location>
</feature>
<feature type="modified residue" description="Phosphoserine" evidence="4">
    <location>
        <position position="42"/>
    </location>
</feature>
<feature type="sequence conflict" description="In Ref. 1; BAC27585." evidence="3" ref="1">
    <original>Y</original>
    <variation>C</variation>
    <location>
        <position position="255"/>
    </location>
</feature>
<dbReference type="EMBL" id="AK019863">
    <property type="protein sequence ID" value="BAB31890.2"/>
    <property type="molecule type" value="mRNA"/>
</dbReference>
<dbReference type="EMBL" id="AK031870">
    <property type="protein sequence ID" value="BAC27585.1"/>
    <property type="molecule type" value="mRNA"/>
</dbReference>
<dbReference type="EMBL" id="AK049933">
    <property type="protein sequence ID" value="BAC33990.1"/>
    <property type="molecule type" value="mRNA"/>
</dbReference>
<dbReference type="EMBL" id="BC048713">
    <property type="protein sequence ID" value="AAH48713.1"/>
    <property type="molecule type" value="mRNA"/>
</dbReference>
<dbReference type="CCDS" id="CCDS38792.1"/>
<dbReference type="RefSeq" id="NP_084225.1">
    <property type="nucleotide sequence ID" value="NM_029949.4"/>
</dbReference>
<dbReference type="RefSeq" id="XP_006538432.1">
    <property type="nucleotide sequence ID" value="XM_006538369.4"/>
</dbReference>
<dbReference type="RefSeq" id="XP_006538433.1">
    <property type="nucleotide sequence ID" value="XM_006538370.4"/>
</dbReference>
<dbReference type="RefSeq" id="XP_006538435.1">
    <property type="nucleotide sequence ID" value="XM_006538372.3"/>
</dbReference>
<dbReference type="RefSeq" id="XP_011248436.1">
    <property type="nucleotide sequence ID" value="XM_011250134.3"/>
</dbReference>
<dbReference type="RefSeq" id="XP_017175944.1">
    <property type="nucleotide sequence ID" value="XM_017320455.2"/>
</dbReference>
<dbReference type="RefSeq" id="XP_017175945.1">
    <property type="nucleotide sequence ID" value="XM_017320456.1"/>
</dbReference>
<dbReference type="RefSeq" id="XP_030109771.1">
    <property type="nucleotide sequence ID" value="XM_030253911.1"/>
</dbReference>
<dbReference type="SMR" id="Q9D2C9"/>
<dbReference type="BioGRID" id="218816">
    <property type="interactions" value="1"/>
</dbReference>
<dbReference type="FunCoup" id="Q9D2C9">
    <property type="interactions" value="3303"/>
</dbReference>
<dbReference type="STRING" id="10090.ENSMUSP00000030206"/>
<dbReference type="iPTMnet" id="Q9D2C9"/>
<dbReference type="PhosphoSitePlus" id="Q9D2C9"/>
<dbReference type="jPOST" id="Q9D2C9"/>
<dbReference type="PaxDb" id="10090-ENSMUSP00000030206"/>
<dbReference type="ProteomicsDB" id="261533"/>
<dbReference type="Antibodypedia" id="10045">
    <property type="antibodies" value="135 antibodies from 22 providers"/>
</dbReference>
<dbReference type="DNASU" id="77634"/>
<dbReference type="Ensembl" id="ENSMUST00000030206.10">
    <property type="protein sequence ID" value="ENSMUSP00000030206.4"/>
    <property type="gene ID" value="ENSMUSG00000028483.14"/>
</dbReference>
<dbReference type="Ensembl" id="ENSMUST00000123262.8">
    <property type="protein sequence ID" value="ENSMUSP00000124038.2"/>
    <property type="gene ID" value="ENSMUSG00000028483.14"/>
</dbReference>
<dbReference type="Ensembl" id="ENSMUST00000124856.8">
    <property type="protein sequence ID" value="ENSMUSP00000124181.2"/>
    <property type="gene ID" value="ENSMUSG00000028483.14"/>
</dbReference>
<dbReference type="Ensembl" id="ENSMUST00000143533.8">
    <property type="protein sequence ID" value="ENSMUSP00000123793.2"/>
    <property type="gene ID" value="ENSMUSG00000028483.14"/>
</dbReference>
<dbReference type="GeneID" id="77634"/>
<dbReference type="KEGG" id="mmu:77634"/>
<dbReference type="UCSC" id="uc008tku.1">
    <property type="organism name" value="mouse"/>
</dbReference>
<dbReference type="AGR" id="MGI:1916338"/>
<dbReference type="CTD" id="6619"/>
<dbReference type="MGI" id="MGI:1916338">
    <property type="gene designation" value="Snapc3"/>
</dbReference>
<dbReference type="VEuPathDB" id="HostDB:ENSMUSG00000028483"/>
<dbReference type="eggNOG" id="KOG2664">
    <property type="taxonomic scope" value="Eukaryota"/>
</dbReference>
<dbReference type="GeneTree" id="ENSGT00390000005708"/>
<dbReference type="HOGENOM" id="CLU_041861_0_1_1"/>
<dbReference type="InParanoid" id="Q9D2C9"/>
<dbReference type="OMA" id="AHRDDCL"/>
<dbReference type="OrthoDB" id="46583at2759"/>
<dbReference type="PhylomeDB" id="Q9D2C9"/>
<dbReference type="TreeFam" id="TF317705"/>
<dbReference type="Reactome" id="R-MMU-6807505">
    <property type="pathway name" value="RNA polymerase II transcribes snRNA genes"/>
</dbReference>
<dbReference type="Reactome" id="R-MMU-76071">
    <property type="pathway name" value="RNA Polymerase III Transcription Initiation From Type 3 Promoter"/>
</dbReference>
<dbReference type="BioGRID-ORCS" id="77634">
    <property type="hits" value="24 hits in 81 CRISPR screens"/>
</dbReference>
<dbReference type="ChiTaRS" id="Snapc3">
    <property type="organism name" value="mouse"/>
</dbReference>
<dbReference type="PRO" id="PR:Q9D2C9"/>
<dbReference type="Proteomes" id="UP000000589">
    <property type="component" value="Chromosome 4"/>
</dbReference>
<dbReference type="RNAct" id="Q9D2C9">
    <property type="molecule type" value="protein"/>
</dbReference>
<dbReference type="Bgee" id="ENSMUSG00000028483">
    <property type="expression patterns" value="Expressed in rostral migratory stream and 260 other cell types or tissues"/>
</dbReference>
<dbReference type="ExpressionAtlas" id="Q9D2C9">
    <property type="expression patterns" value="baseline and differential"/>
</dbReference>
<dbReference type="GO" id="GO:0016604">
    <property type="term" value="C:nuclear body"/>
    <property type="evidence" value="ECO:0007669"/>
    <property type="project" value="Ensembl"/>
</dbReference>
<dbReference type="GO" id="GO:0005730">
    <property type="term" value="C:nucleolus"/>
    <property type="evidence" value="ECO:0007669"/>
    <property type="project" value="Ensembl"/>
</dbReference>
<dbReference type="GO" id="GO:0003677">
    <property type="term" value="F:DNA binding"/>
    <property type="evidence" value="ECO:0007669"/>
    <property type="project" value="UniProtKB-KW"/>
</dbReference>
<dbReference type="InterPro" id="IPR022042">
    <property type="entry name" value="snRNA-activating_su3"/>
</dbReference>
<dbReference type="PANTHER" id="PTHR13421">
    <property type="entry name" value="SNRNA-ACTIVATING PROTEIN COMPLEX SUBUNIT 3"/>
    <property type="match status" value="1"/>
</dbReference>
<dbReference type="PANTHER" id="PTHR13421:SF16">
    <property type="entry name" value="SNRNA-ACTIVATING PROTEIN COMPLEX SUBUNIT 3"/>
    <property type="match status" value="1"/>
</dbReference>
<dbReference type="Pfam" id="PF12251">
    <property type="entry name" value="SNAPC3"/>
    <property type="match status" value="1"/>
</dbReference>
<keyword id="KW-0238">DNA-binding</keyword>
<keyword id="KW-0539">Nucleus</keyword>
<keyword id="KW-0597">Phosphoprotein</keyword>
<keyword id="KW-1185">Reference proteome</keyword>
<keyword id="KW-0804">Transcription</keyword>
<keyword id="KW-0805">Transcription regulation</keyword>
<reference key="1">
    <citation type="journal article" date="2005" name="Science">
        <title>The transcriptional landscape of the mammalian genome.</title>
        <authorList>
            <person name="Carninci P."/>
            <person name="Kasukawa T."/>
            <person name="Katayama S."/>
            <person name="Gough J."/>
            <person name="Frith M.C."/>
            <person name="Maeda N."/>
            <person name="Oyama R."/>
            <person name="Ravasi T."/>
            <person name="Lenhard B."/>
            <person name="Wells C."/>
            <person name="Kodzius R."/>
            <person name="Shimokawa K."/>
            <person name="Bajic V.B."/>
            <person name="Brenner S.E."/>
            <person name="Batalov S."/>
            <person name="Forrest A.R."/>
            <person name="Zavolan M."/>
            <person name="Davis M.J."/>
            <person name="Wilming L.G."/>
            <person name="Aidinis V."/>
            <person name="Allen J.E."/>
            <person name="Ambesi-Impiombato A."/>
            <person name="Apweiler R."/>
            <person name="Aturaliya R.N."/>
            <person name="Bailey T.L."/>
            <person name="Bansal M."/>
            <person name="Baxter L."/>
            <person name="Beisel K.W."/>
            <person name="Bersano T."/>
            <person name="Bono H."/>
            <person name="Chalk A.M."/>
            <person name="Chiu K.P."/>
            <person name="Choudhary V."/>
            <person name="Christoffels A."/>
            <person name="Clutterbuck D.R."/>
            <person name="Crowe M.L."/>
            <person name="Dalla E."/>
            <person name="Dalrymple B.P."/>
            <person name="de Bono B."/>
            <person name="Della Gatta G."/>
            <person name="di Bernardo D."/>
            <person name="Down T."/>
            <person name="Engstrom P."/>
            <person name="Fagiolini M."/>
            <person name="Faulkner G."/>
            <person name="Fletcher C.F."/>
            <person name="Fukushima T."/>
            <person name="Furuno M."/>
            <person name="Futaki S."/>
            <person name="Gariboldi M."/>
            <person name="Georgii-Hemming P."/>
            <person name="Gingeras T.R."/>
            <person name="Gojobori T."/>
            <person name="Green R.E."/>
            <person name="Gustincich S."/>
            <person name="Harbers M."/>
            <person name="Hayashi Y."/>
            <person name="Hensch T.K."/>
            <person name="Hirokawa N."/>
            <person name="Hill D."/>
            <person name="Huminiecki L."/>
            <person name="Iacono M."/>
            <person name="Ikeo K."/>
            <person name="Iwama A."/>
            <person name="Ishikawa T."/>
            <person name="Jakt M."/>
            <person name="Kanapin A."/>
            <person name="Katoh M."/>
            <person name="Kawasawa Y."/>
            <person name="Kelso J."/>
            <person name="Kitamura H."/>
            <person name="Kitano H."/>
            <person name="Kollias G."/>
            <person name="Krishnan S.P."/>
            <person name="Kruger A."/>
            <person name="Kummerfeld S.K."/>
            <person name="Kurochkin I.V."/>
            <person name="Lareau L.F."/>
            <person name="Lazarevic D."/>
            <person name="Lipovich L."/>
            <person name="Liu J."/>
            <person name="Liuni S."/>
            <person name="McWilliam S."/>
            <person name="Madan Babu M."/>
            <person name="Madera M."/>
            <person name="Marchionni L."/>
            <person name="Matsuda H."/>
            <person name="Matsuzawa S."/>
            <person name="Miki H."/>
            <person name="Mignone F."/>
            <person name="Miyake S."/>
            <person name="Morris K."/>
            <person name="Mottagui-Tabar S."/>
            <person name="Mulder N."/>
            <person name="Nakano N."/>
            <person name="Nakauchi H."/>
            <person name="Ng P."/>
            <person name="Nilsson R."/>
            <person name="Nishiguchi S."/>
            <person name="Nishikawa S."/>
            <person name="Nori F."/>
            <person name="Ohara O."/>
            <person name="Okazaki Y."/>
            <person name="Orlando V."/>
            <person name="Pang K.C."/>
            <person name="Pavan W.J."/>
            <person name="Pavesi G."/>
            <person name="Pesole G."/>
            <person name="Petrovsky N."/>
            <person name="Piazza S."/>
            <person name="Reed J."/>
            <person name="Reid J.F."/>
            <person name="Ring B.Z."/>
            <person name="Ringwald M."/>
            <person name="Rost B."/>
            <person name="Ruan Y."/>
            <person name="Salzberg S.L."/>
            <person name="Sandelin A."/>
            <person name="Schneider C."/>
            <person name="Schoenbach C."/>
            <person name="Sekiguchi K."/>
            <person name="Semple C.A."/>
            <person name="Seno S."/>
            <person name="Sessa L."/>
            <person name="Sheng Y."/>
            <person name="Shibata Y."/>
            <person name="Shimada H."/>
            <person name="Shimada K."/>
            <person name="Silva D."/>
            <person name="Sinclair B."/>
            <person name="Sperling S."/>
            <person name="Stupka E."/>
            <person name="Sugiura K."/>
            <person name="Sultana R."/>
            <person name="Takenaka Y."/>
            <person name="Taki K."/>
            <person name="Tammoja K."/>
            <person name="Tan S.L."/>
            <person name="Tang S."/>
            <person name="Taylor M.S."/>
            <person name="Tegner J."/>
            <person name="Teichmann S.A."/>
            <person name="Ueda H.R."/>
            <person name="van Nimwegen E."/>
            <person name="Verardo R."/>
            <person name="Wei C.L."/>
            <person name="Yagi K."/>
            <person name="Yamanishi H."/>
            <person name="Zabarovsky E."/>
            <person name="Zhu S."/>
            <person name="Zimmer A."/>
            <person name="Hide W."/>
            <person name="Bult C."/>
            <person name="Grimmond S.M."/>
            <person name="Teasdale R.D."/>
            <person name="Liu E.T."/>
            <person name="Brusic V."/>
            <person name="Quackenbush J."/>
            <person name="Wahlestedt C."/>
            <person name="Mattick J.S."/>
            <person name="Hume D.A."/>
            <person name="Kai C."/>
            <person name="Sasaki D."/>
            <person name="Tomaru Y."/>
            <person name="Fukuda S."/>
            <person name="Kanamori-Katayama M."/>
            <person name="Suzuki M."/>
            <person name="Aoki J."/>
            <person name="Arakawa T."/>
            <person name="Iida J."/>
            <person name="Imamura K."/>
            <person name="Itoh M."/>
            <person name="Kato T."/>
            <person name="Kawaji H."/>
            <person name="Kawagashira N."/>
            <person name="Kawashima T."/>
            <person name="Kojima M."/>
            <person name="Kondo S."/>
            <person name="Konno H."/>
            <person name="Nakano K."/>
            <person name="Ninomiya N."/>
            <person name="Nishio T."/>
            <person name="Okada M."/>
            <person name="Plessy C."/>
            <person name="Shibata K."/>
            <person name="Shiraki T."/>
            <person name="Suzuki S."/>
            <person name="Tagami M."/>
            <person name="Waki K."/>
            <person name="Watahiki A."/>
            <person name="Okamura-Oho Y."/>
            <person name="Suzuki H."/>
            <person name="Kawai J."/>
            <person name="Hayashizaki Y."/>
        </authorList>
    </citation>
    <scope>NUCLEOTIDE SEQUENCE [LARGE SCALE MRNA]</scope>
    <source>
        <strain>C57BL/6J</strain>
        <tissue>Hippocampus</tissue>
        <tissue>Medulla oblongata</tissue>
        <tissue>Ovary</tissue>
        <tissue>Uterus</tissue>
    </source>
</reference>
<reference key="2">
    <citation type="journal article" date="2004" name="Genome Res.">
        <title>The status, quality, and expansion of the NIH full-length cDNA project: the Mammalian Gene Collection (MGC).</title>
        <authorList>
            <consortium name="The MGC Project Team"/>
        </authorList>
    </citation>
    <scope>NUCLEOTIDE SEQUENCE [LARGE SCALE MRNA]</scope>
    <source>
        <tissue>Embryo</tissue>
    </source>
</reference>
<reference key="3">
    <citation type="journal article" date="2010" name="Cell">
        <title>A tissue-specific atlas of mouse protein phosphorylation and expression.</title>
        <authorList>
            <person name="Huttlin E.L."/>
            <person name="Jedrychowski M.P."/>
            <person name="Elias J.E."/>
            <person name="Goswami T."/>
            <person name="Rad R."/>
            <person name="Beausoleil S.A."/>
            <person name="Villen J."/>
            <person name="Haas W."/>
            <person name="Sowa M.E."/>
            <person name="Gygi S.P."/>
        </authorList>
    </citation>
    <scope>PHOSPHORYLATION [LARGE SCALE ANALYSIS] AT SER-42</scope>
    <scope>IDENTIFICATION BY MASS SPECTROMETRY [LARGE SCALE ANALYSIS]</scope>
    <source>
        <tissue>Spleen</tissue>
    </source>
</reference>
<accession>Q9D2C9</accession>
<accession>Q8C0A5</accession>
<protein>
    <recommendedName>
        <fullName>snRNA-activating protein complex subunit 3</fullName>
        <shortName>SNAPc subunit 3</shortName>
    </recommendedName>
    <alternativeName>
        <fullName>Small nuclear RNA-activating complex polypeptide 3</fullName>
    </alternativeName>
</protein>
<organism>
    <name type="scientific">Mus musculus</name>
    <name type="common">Mouse</name>
    <dbReference type="NCBI Taxonomy" id="10090"/>
    <lineage>
        <taxon>Eukaryota</taxon>
        <taxon>Metazoa</taxon>
        <taxon>Chordata</taxon>
        <taxon>Craniata</taxon>
        <taxon>Vertebrata</taxon>
        <taxon>Euteleostomi</taxon>
        <taxon>Mammalia</taxon>
        <taxon>Eutheria</taxon>
        <taxon>Euarchontoglires</taxon>
        <taxon>Glires</taxon>
        <taxon>Rodentia</taxon>
        <taxon>Myomorpha</taxon>
        <taxon>Muroidea</taxon>
        <taxon>Muridae</taxon>
        <taxon>Murinae</taxon>
        <taxon>Mus</taxon>
        <taxon>Mus</taxon>
    </lineage>
</organism>
<evidence type="ECO:0000250" key="1"/>
<evidence type="ECO:0000256" key="2">
    <source>
        <dbReference type="SAM" id="MobiDB-lite"/>
    </source>
</evidence>
<evidence type="ECO:0000305" key="3"/>
<evidence type="ECO:0007744" key="4">
    <source>
    </source>
</evidence>
<gene>
    <name type="primary">Snapc3</name>
</gene>
<sequence length="407" mass="46277">MAEDLQGGGAGGPQHPVPSASHSSFPEYELPELHTRVFHVGSFGELWRGRLGAQDLSLSEPQAAEQPTDGGASNDGFEDAAVASDLGCSLEAAAELRVVCGLDKLRCLGEDEDPEVIPENTDLVTLCVRKGLLDYREENITIDRACRQEIFAYEMESHALGKKPENPADMIEEGECILSVNILYPVIFNKHKEHKPYQTMLVLGSQKLTELRDSICCVSDLQIGGEFSNAPDQAPEHISKDLYKSAFFYFEGTFYNDRRYPECRDLSRTIIEWSESHDRGYGKFQTARMEDFTFNDLHIKLGFPYLYCHQGDCEHVVVITDIRLVHHDDCLDRTLYPLLTKKHWLWTRKCFVCKMYTARWVTNNDTFAPEDPCFFCDVCFRMLHYDSEGNKLGEFLAYPYVDPGTFN</sequence>
<name>SNPC3_MOUSE</name>